<evidence type="ECO:0000255" key="1">
    <source>
        <dbReference type="HAMAP-Rule" id="MF_00183"/>
    </source>
</evidence>
<gene>
    <name evidence="1" type="primary">dxr2</name>
    <name type="synonym">dxr-2</name>
    <name type="ordered locus">BA_3959</name>
    <name type="ordered locus">GBAA_3959</name>
    <name type="ordered locus">BAS3672</name>
</gene>
<comment type="function">
    <text evidence="1">Catalyzes the NADPH-dependent rearrangement and reduction of 1-deoxy-D-xylulose-5-phosphate (DXP) to 2-C-methyl-D-erythritol 4-phosphate (MEP).</text>
</comment>
<comment type="catalytic activity">
    <reaction evidence="1">
        <text>2-C-methyl-D-erythritol 4-phosphate + NADP(+) = 1-deoxy-D-xylulose 5-phosphate + NADPH + H(+)</text>
        <dbReference type="Rhea" id="RHEA:13717"/>
        <dbReference type="ChEBI" id="CHEBI:15378"/>
        <dbReference type="ChEBI" id="CHEBI:57783"/>
        <dbReference type="ChEBI" id="CHEBI:57792"/>
        <dbReference type="ChEBI" id="CHEBI:58262"/>
        <dbReference type="ChEBI" id="CHEBI:58349"/>
        <dbReference type="EC" id="1.1.1.267"/>
    </reaction>
    <physiologicalReaction direction="right-to-left" evidence="1">
        <dbReference type="Rhea" id="RHEA:13719"/>
    </physiologicalReaction>
</comment>
<comment type="cofactor">
    <cofactor evidence="1">
        <name>Mg(2+)</name>
        <dbReference type="ChEBI" id="CHEBI:18420"/>
    </cofactor>
    <cofactor evidence="1">
        <name>Mn(2+)</name>
        <dbReference type="ChEBI" id="CHEBI:29035"/>
    </cofactor>
</comment>
<comment type="pathway">
    <text evidence="1">Isoprenoid biosynthesis; isopentenyl diphosphate biosynthesis via DXP pathway; isopentenyl diphosphate from 1-deoxy-D-xylulose 5-phosphate: step 1/6.</text>
</comment>
<comment type="similarity">
    <text evidence="1">Belongs to the DXR family.</text>
</comment>
<keyword id="KW-0414">Isoprene biosynthesis</keyword>
<keyword id="KW-0464">Manganese</keyword>
<keyword id="KW-0479">Metal-binding</keyword>
<keyword id="KW-0521">NADP</keyword>
<keyword id="KW-0560">Oxidoreductase</keyword>
<keyword id="KW-1185">Reference proteome</keyword>
<name>DXR2_BACAN</name>
<proteinExistence type="inferred from homology"/>
<feature type="chain" id="PRO_0000163601" description="1-deoxy-D-xylulose 5-phosphate reductoisomerase 2">
    <location>
        <begin position="1"/>
        <end position="380"/>
    </location>
</feature>
<feature type="binding site" evidence="1">
    <location>
        <position position="10"/>
    </location>
    <ligand>
        <name>NADPH</name>
        <dbReference type="ChEBI" id="CHEBI:57783"/>
    </ligand>
</feature>
<feature type="binding site" evidence="1">
    <location>
        <position position="11"/>
    </location>
    <ligand>
        <name>NADPH</name>
        <dbReference type="ChEBI" id="CHEBI:57783"/>
    </ligand>
</feature>
<feature type="binding site" evidence="1">
    <location>
        <position position="12"/>
    </location>
    <ligand>
        <name>NADPH</name>
        <dbReference type="ChEBI" id="CHEBI:57783"/>
    </ligand>
</feature>
<feature type="binding site" evidence="1">
    <location>
        <position position="13"/>
    </location>
    <ligand>
        <name>NADPH</name>
        <dbReference type="ChEBI" id="CHEBI:57783"/>
    </ligand>
</feature>
<feature type="binding site" evidence="1">
    <location>
        <position position="36"/>
    </location>
    <ligand>
        <name>NADPH</name>
        <dbReference type="ChEBI" id="CHEBI:57783"/>
    </ligand>
</feature>
<feature type="binding site" evidence="1">
    <location>
        <position position="37"/>
    </location>
    <ligand>
        <name>NADPH</name>
        <dbReference type="ChEBI" id="CHEBI:57783"/>
    </ligand>
</feature>
<feature type="binding site" evidence="1">
    <location>
        <position position="38"/>
    </location>
    <ligand>
        <name>NADPH</name>
        <dbReference type="ChEBI" id="CHEBI:57783"/>
    </ligand>
</feature>
<feature type="binding site" evidence="1">
    <location>
        <position position="120"/>
    </location>
    <ligand>
        <name>NADPH</name>
        <dbReference type="ChEBI" id="CHEBI:57783"/>
    </ligand>
</feature>
<feature type="binding site" evidence="1">
    <location>
        <position position="121"/>
    </location>
    <ligand>
        <name>1-deoxy-D-xylulose 5-phosphate</name>
        <dbReference type="ChEBI" id="CHEBI:57792"/>
    </ligand>
</feature>
<feature type="binding site" evidence="1">
    <location>
        <position position="122"/>
    </location>
    <ligand>
        <name>NADPH</name>
        <dbReference type="ChEBI" id="CHEBI:57783"/>
    </ligand>
</feature>
<feature type="binding site" evidence="1">
    <location>
        <position position="146"/>
    </location>
    <ligand>
        <name>Mn(2+)</name>
        <dbReference type="ChEBI" id="CHEBI:29035"/>
    </ligand>
</feature>
<feature type="binding site" evidence="1">
    <location>
        <position position="147"/>
    </location>
    <ligand>
        <name>1-deoxy-D-xylulose 5-phosphate</name>
        <dbReference type="ChEBI" id="CHEBI:57792"/>
    </ligand>
</feature>
<feature type="binding site" evidence="1">
    <location>
        <position position="148"/>
    </location>
    <ligand>
        <name>1-deoxy-D-xylulose 5-phosphate</name>
        <dbReference type="ChEBI" id="CHEBI:57792"/>
    </ligand>
</feature>
<feature type="binding site" evidence="1">
    <location>
        <position position="148"/>
    </location>
    <ligand>
        <name>Mn(2+)</name>
        <dbReference type="ChEBI" id="CHEBI:29035"/>
    </ligand>
</feature>
<feature type="binding site" evidence="1">
    <location>
        <position position="172"/>
    </location>
    <ligand>
        <name>1-deoxy-D-xylulose 5-phosphate</name>
        <dbReference type="ChEBI" id="CHEBI:57792"/>
    </ligand>
</feature>
<feature type="binding site" evidence="1">
    <location>
        <position position="195"/>
    </location>
    <ligand>
        <name>1-deoxy-D-xylulose 5-phosphate</name>
        <dbReference type="ChEBI" id="CHEBI:57792"/>
    </ligand>
</feature>
<feature type="binding site" evidence="1">
    <location>
        <position position="201"/>
    </location>
    <ligand>
        <name>NADPH</name>
        <dbReference type="ChEBI" id="CHEBI:57783"/>
    </ligand>
</feature>
<feature type="binding site" evidence="1">
    <location>
        <position position="208"/>
    </location>
    <ligand>
        <name>1-deoxy-D-xylulose 5-phosphate</name>
        <dbReference type="ChEBI" id="CHEBI:57792"/>
    </ligand>
</feature>
<feature type="binding site" evidence="1">
    <location>
        <position position="213"/>
    </location>
    <ligand>
        <name>1-deoxy-D-xylulose 5-phosphate</name>
        <dbReference type="ChEBI" id="CHEBI:57792"/>
    </ligand>
</feature>
<feature type="binding site" evidence="1">
    <location>
        <position position="214"/>
    </location>
    <ligand>
        <name>1-deoxy-D-xylulose 5-phosphate</name>
        <dbReference type="ChEBI" id="CHEBI:57792"/>
    </ligand>
</feature>
<feature type="binding site" evidence="1">
    <location>
        <position position="217"/>
    </location>
    <ligand>
        <name>1-deoxy-D-xylulose 5-phosphate</name>
        <dbReference type="ChEBI" id="CHEBI:57792"/>
    </ligand>
</feature>
<feature type="binding site" evidence="1">
    <location>
        <position position="217"/>
    </location>
    <ligand>
        <name>Mn(2+)</name>
        <dbReference type="ChEBI" id="CHEBI:29035"/>
    </ligand>
</feature>
<sequence length="380" mass="42239">MKNISLLGASGSIGTQTLDVLRSHPDQFRLVAFSVGKNIDYAVKVIQEFSPQIVSVQREEDVLKLQAVSGNTKIVYGSEGLLEVALHPDAEIVVNAVVGSVGLLPTLRAIEAKKTIGIANKETLVTAGHLVMEAARKHNVSLLPVDSEHSAIFQCLNGENEKRISRLIITASGGSFRDKTRDELHHVTVEDALRHPNWSMGSKITIDSATMMNKGLEVIEAHWLFGIPYEQIDVVLHKESIIHSMVEFEDRSVMAQLGSPDMRVPIQYALTYPDRLPLSDTKQLNLWEIGTLHFEKMNQERFRCLRFAYEAGKAGGSMPAVMNAANEVAVEAFLQKRIGFLTVEDLIEKAMNHHNVIARPSLEEILEIDAATRRFVMEQI</sequence>
<protein>
    <recommendedName>
        <fullName evidence="1">1-deoxy-D-xylulose 5-phosphate reductoisomerase 2</fullName>
        <shortName evidence="1">DXP reductoisomerase 2</shortName>
        <ecNumber evidence="1">1.1.1.267</ecNumber>
    </recommendedName>
    <alternativeName>
        <fullName evidence="1">1-deoxyxylulose-5-phosphate reductoisomerase 2</fullName>
    </alternativeName>
    <alternativeName>
        <fullName evidence="1">2-C-methyl-D-erythritol 4-phosphate synthase 2</fullName>
    </alternativeName>
</protein>
<reference key="1">
    <citation type="journal article" date="2003" name="Nature">
        <title>The genome sequence of Bacillus anthracis Ames and comparison to closely related bacteria.</title>
        <authorList>
            <person name="Read T.D."/>
            <person name="Peterson S.N."/>
            <person name="Tourasse N.J."/>
            <person name="Baillie L.W."/>
            <person name="Paulsen I.T."/>
            <person name="Nelson K.E."/>
            <person name="Tettelin H."/>
            <person name="Fouts D.E."/>
            <person name="Eisen J.A."/>
            <person name="Gill S.R."/>
            <person name="Holtzapple E.K."/>
            <person name="Okstad O.A."/>
            <person name="Helgason E."/>
            <person name="Rilstone J."/>
            <person name="Wu M."/>
            <person name="Kolonay J.F."/>
            <person name="Beanan M.J."/>
            <person name="Dodson R.J."/>
            <person name="Brinkac L.M."/>
            <person name="Gwinn M.L."/>
            <person name="DeBoy R.T."/>
            <person name="Madpu R."/>
            <person name="Daugherty S.C."/>
            <person name="Durkin A.S."/>
            <person name="Haft D.H."/>
            <person name="Nelson W.C."/>
            <person name="Peterson J.D."/>
            <person name="Pop M."/>
            <person name="Khouri H.M."/>
            <person name="Radune D."/>
            <person name="Benton J.L."/>
            <person name="Mahamoud Y."/>
            <person name="Jiang L."/>
            <person name="Hance I.R."/>
            <person name="Weidman J.F."/>
            <person name="Berry K.J."/>
            <person name="Plaut R.D."/>
            <person name="Wolf A.M."/>
            <person name="Watkins K.L."/>
            <person name="Nierman W.C."/>
            <person name="Hazen A."/>
            <person name="Cline R.T."/>
            <person name="Redmond C."/>
            <person name="Thwaite J.E."/>
            <person name="White O."/>
            <person name="Salzberg S.L."/>
            <person name="Thomason B."/>
            <person name="Friedlander A.M."/>
            <person name="Koehler T.M."/>
            <person name="Hanna P.C."/>
            <person name="Kolstoe A.-B."/>
            <person name="Fraser C.M."/>
        </authorList>
    </citation>
    <scope>NUCLEOTIDE SEQUENCE [LARGE SCALE GENOMIC DNA]</scope>
    <source>
        <strain>Ames / isolate Porton</strain>
    </source>
</reference>
<reference key="2">
    <citation type="journal article" date="2009" name="J. Bacteriol.">
        <title>The complete genome sequence of Bacillus anthracis Ames 'Ancestor'.</title>
        <authorList>
            <person name="Ravel J."/>
            <person name="Jiang L."/>
            <person name="Stanley S.T."/>
            <person name="Wilson M.R."/>
            <person name="Decker R.S."/>
            <person name="Read T.D."/>
            <person name="Worsham P."/>
            <person name="Keim P.S."/>
            <person name="Salzberg S.L."/>
            <person name="Fraser-Liggett C.M."/>
            <person name="Rasko D.A."/>
        </authorList>
    </citation>
    <scope>NUCLEOTIDE SEQUENCE [LARGE SCALE GENOMIC DNA]</scope>
    <source>
        <strain>Ames ancestor</strain>
    </source>
</reference>
<reference key="3">
    <citation type="submission" date="2004-01" db="EMBL/GenBank/DDBJ databases">
        <title>Complete genome sequence of Bacillus anthracis Sterne.</title>
        <authorList>
            <person name="Brettin T.S."/>
            <person name="Bruce D."/>
            <person name="Challacombe J.F."/>
            <person name="Gilna P."/>
            <person name="Han C."/>
            <person name="Hill K."/>
            <person name="Hitchcock P."/>
            <person name="Jackson P."/>
            <person name="Keim P."/>
            <person name="Longmire J."/>
            <person name="Lucas S."/>
            <person name="Okinaka R."/>
            <person name="Richardson P."/>
            <person name="Rubin E."/>
            <person name="Tice H."/>
        </authorList>
    </citation>
    <scope>NUCLEOTIDE SEQUENCE [LARGE SCALE GENOMIC DNA]</scope>
    <source>
        <strain>Sterne</strain>
    </source>
</reference>
<organism>
    <name type="scientific">Bacillus anthracis</name>
    <dbReference type="NCBI Taxonomy" id="1392"/>
    <lineage>
        <taxon>Bacteria</taxon>
        <taxon>Bacillati</taxon>
        <taxon>Bacillota</taxon>
        <taxon>Bacilli</taxon>
        <taxon>Bacillales</taxon>
        <taxon>Bacillaceae</taxon>
        <taxon>Bacillus</taxon>
        <taxon>Bacillus cereus group</taxon>
    </lineage>
</organism>
<accession>Q81WL4</accession>
<accession>Q6HUR5</accession>
<accession>Q6KNZ6</accession>
<dbReference type="EC" id="1.1.1.267" evidence="1"/>
<dbReference type="EMBL" id="AE016879">
    <property type="protein sequence ID" value="AAP27688.1"/>
    <property type="molecule type" value="Genomic_DNA"/>
</dbReference>
<dbReference type="EMBL" id="AE017334">
    <property type="protein sequence ID" value="AAT33073.1"/>
    <property type="molecule type" value="Genomic_DNA"/>
</dbReference>
<dbReference type="EMBL" id="AE017225">
    <property type="protein sequence ID" value="AAT55974.1"/>
    <property type="molecule type" value="Genomic_DNA"/>
</dbReference>
<dbReference type="RefSeq" id="NP_846202.1">
    <property type="nucleotide sequence ID" value="NC_003997.3"/>
</dbReference>
<dbReference type="RefSeq" id="YP_029923.1">
    <property type="nucleotide sequence ID" value="NC_005945.1"/>
</dbReference>
<dbReference type="SMR" id="Q81WL4"/>
<dbReference type="STRING" id="261594.GBAA_3959"/>
<dbReference type="DNASU" id="1086817"/>
<dbReference type="GeneID" id="45023649"/>
<dbReference type="KEGG" id="ban:BA_3959"/>
<dbReference type="KEGG" id="bar:GBAA_3959"/>
<dbReference type="KEGG" id="bat:BAS3672"/>
<dbReference type="PATRIC" id="fig|198094.11.peg.3929"/>
<dbReference type="eggNOG" id="COG0743">
    <property type="taxonomic scope" value="Bacteria"/>
</dbReference>
<dbReference type="HOGENOM" id="CLU_035714_4_0_9"/>
<dbReference type="OMA" id="AHPNWVM"/>
<dbReference type="OrthoDB" id="9806546at2"/>
<dbReference type="UniPathway" id="UPA00056">
    <property type="reaction ID" value="UER00092"/>
</dbReference>
<dbReference type="Proteomes" id="UP000000427">
    <property type="component" value="Chromosome"/>
</dbReference>
<dbReference type="Proteomes" id="UP000000594">
    <property type="component" value="Chromosome"/>
</dbReference>
<dbReference type="GO" id="GO:0030604">
    <property type="term" value="F:1-deoxy-D-xylulose-5-phosphate reductoisomerase activity"/>
    <property type="evidence" value="ECO:0007669"/>
    <property type="project" value="UniProtKB-UniRule"/>
</dbReference>
<dbReference type="GO" id="GO:0030145">
    <property type="term" value="F:manganese ion binding"/>
    <property type="evidence" value="ECO:0007669"/>
    <property type="project" value="TreeGrafter"/>
</dbReference>
<dbReference type="GO" id="GO:0070402">
    <property type="term" value="F:NADPH binding"/>
    <property type="evidence" value="ECO:0007669"/>
    <property type="project" value="InterPro"/>
</dbReference>
<dbReference type="GO" id="GO:0051484">
    <property type="term" value="P:isopentenyl diphosphate biosynthetic process, methylerythritol 4-phosphate pathway involved in terpenoid biosynthetic process"/>
    <property type="evidence" value="ECO:0007669"/>
    <property type="project" value="TreeGrafter"/>
</dbReference>
<dbReference type="FunFam" id="1.10.1740.10:FF:000005">
    <property type="entry name" value="1-deoxy-D-xylulose 5-phosphate reductoisomerase"/>
    <property type="match status" value="1"/>
</dbReference>
<dbReference type="FunFam" id="3.40.50.720:FF:000045">
    <property type="entry name" value="1-deoxy-D-xylulose 5-phosphate reductoisomerase"/>
    <property type="match status" value="1"/>
</dbReference>
<dbReference type="Gene3D" id="1.10.1740.10">
    <property type="match status" value="1"/>
</dbReference>
<dbReference type="Gene3D" id="3.40.50.720">
    <property type="entry name" value="NAD(P)-binding Rossmann-like Domain"/>
    <property type="match status" value="1"/>
</dbReference>
<dbReference type="HAMAP" id="MF_00183">
    <property type="entry name" value="DXP_reductoisom"/>
    <property type="match status" value="1"/>
</dbReference>
<dbReference type="InterPro" id="IPR003821">
    <property type="entry name" value="DXP_reductoisomerase"/>
</dbReference>
<dbReference type="InterPro" id="IPR013644">
    <property type="entry name" value="DXP_reductoisomerase_C"/>
</dbReference>
<dbReference type="InterPro" id="IPR013512">
    <property type="entry name" value="DXP_reductoisomerase_N"/>
</dbReference>
<dbReference type="InterPro" id="IPR026877">
    <property type="entry name" value="DXPR_C"/>
</dbReference>
<dbReference type="InterPro" id="IPR036169">
    <property type="entry name" value="DXPR_C_sf"/>
</dbReference>
<dbReference type="InterPro" id="IPR036291">
    <property type="entry name" value="NAD(P)-bd_dom_sf"/>
</dbReference>
<dbReference type="NCBIfam" id="TIGR00243">
    <property type="entry name" value="Dxr"/>
    <property type="match status" value="1"/>
</dbReference>
<dbReference type="NCBIfam" id="NF009114">
    <property type="entry name" value="PRK12464.1"/>
    <property type="match status" value="1"/>
</dbReference>
<dbReference type="PANTHER" id="PTHR30525">
    <property type="entry name" value="1-DEOXY-D-XYLULOSE 5-PHOSPHATE REDUCTOISOMERASE"/>
    <property type="match status" value="1"/>
</dbReference>
<dbReference type="PANTHER" id="PTHR30525:SF0">
    <property type="entry name" value="1-DEOXY-D-XYLULOSE 5-PHOSPHATE REDUCTOISOMERASE, CHLOROPLASTIC"/>
    <property type="match status" value="1"/>
</dbReference>
<dbReference type="Pfam" id="PF08436">
    <property type="entry name" value="DXP_redisom_C"/>
    <property type="match status" value="1"/>
</dbReference>
<dbReference type="Pfam" id="PF02670">
    <property type="entry name" value="DXP_reductoisom"/>
    <property type="match status" value="1"/>
</dbReference>
<dbReference type="Pfam" id="PF13288">
    <property type="entry name" value="DXPR_C"/>
    <property type="match status" value="1"/>
</dbReference>
<dbReference type="PIRSF" id="PIRSF006205">
    <property type="entry name" value="Dxp_reductismrs"/>
    <property type="match status" value="1"/>
</dbReference>
<dbReference type="SUPFAM" id="SSF69055">
    <property type="entry name" value="1-deoxy-D-xylulose-5-phosphate reductoisomerase, C-terminal domain"/>
    <property type="match status" value="1"/>
</dbReference>
<dbReference type="SUPFAM" id="SSF55347">
    <property type="entry name" value="Glyceraldehyde-3-phosphate dehydrogenase-like, C-terminal domain"/>
    <property type="match status" value="1"/>
</dbReference>
<dbReference type="SUPFAM" id="SSF51735">
    <property type="entry name" value="NAD(P)-binding Rossmann-fold domains"/>
    <property type="match status" value="1"/>
</dbReference>